<protein>
    <recommendedName>
        <fullName>Uncharacterized peptidase YFR006W</fullName>
        <ecNumber>3.4.-.-</ecNumber>
    </recommendedName>
</protein>
<organism>
    <name type="scientific">Saccharomyces cerevisiae (strain ATCC 204508 / S288c)</name>
    <name type="common">Baker's yeast</name>
    <dbReference type="NCBI Taxonomy" id="559292"/>
    <lineage>
        <taxon>Eukaryota</taxon>
        <taxon>Fungi</taxon>
        <taxon>Dikarya</taxon>
        <taxon>Ascomycota</taxon>
        <taxon>Saccharomycotina</taxon>
        <taxon>Saccharomycetes</taxon>
        <taxon>Saccharomycetales</taxon>
        <taxon>Saccharomycetaceae</taxon>
        <taxon>Saccharomyces</taxon>
    </lineage>
</organism>
<dbReference type="EC" id="3.4.-.-"/>
<dbReference type="EMBL" id="D50617">
    <property type="protein sequence ID" value="BAA09245.1"/>
    <property type="molecule type" value="Genomic_DNA"/>
</dbReference>
<dbReference type="EMBL" id="AY723803">
    <property type="protein sequence ID" value="AAU09720.1"/>
    <property type="molecule type" value="Genomic_DNA"/>
</dbReference>
<dbReference type="EMBL" id="BK006940">
    <property type="protein sequence ID" value="DAA12446.1"/>
    <property type="molecule type" value="Genomic_DNA"/>
</dbReference>
<dbReference type="PIR" id="S56261">
    <property type="entry name" value="S56261"/>
</dbReference>
<dbReference type="RefSeq" id="NP_116661.1">
    <property type="nucleotide sequence ID" value="NM_001179971.1"/>
</dbReference>
<dbReference type="SMR" id="P43590"/>
<dbReference type="BioGRID" id="31154">
    <property type="interactions" value="115"/>
</dbReference>
<dbReference type="DIP" id="DIP-6829N"/>
<dbReference type="FunCoup" id="P43590">
    <property type="interactions" value="512"/>
</dbReference>
<dbReference type="IntAct" id="P43590">
    <property type="interactions" value="1"/>
</dbReference>
<dbReference type="STRING" id="4932.YFR006W"/>
<dbReference type="MEROPS" id="M24.A09"/>
<dbReference type="iPTMnet" id="P43590"/>
<dbReference type="PaxDb" id="4932-YFR006W"/>
<dbReference type="PeptideAtlas" id="P43590"/>
<dbReference type="EnsemblFungi" id="YFR006W_mRNA">
    <property type="protein sequence ID" value="YFR006W"/>
    <property type="gene ID" value="YFR006W"/>
</dbReference>
<dbReference type="GeneID" id="850556"/>
<dbReference type="KEGG" id="sce:YFR006W"/>
<dbReference type="AGR" id="SGD:S000001902"/>
<dbReference type="SGD" id="S000001902">
    <property type="gene designation" value="YFR006W"/>
</dbReference>
<dbReference type="VEuPathDB" id="FungiDB:YFR006W"/>
<dbReference type="eggNOG" id="KOG2737">
    <property type="taxonomic scope" value="Eukaryota"/>
</dbReference>
<dbReference type="GeneTree" id="ENSGT00940000153657"/>
<dbReference type="HOGENOM" id="CLU_017266_1_2_1"/>
<dbReference type="InParanoid" id="P43590"/>
<dbReference type="OMA" id="DAHALFF"/>
<dbReference type="OrthoDB" id="10261878at2759"/>
<dbReference type="BioCyc" id="YEAST:G3O-30459-MONOMER"/>
<dbReference type="BioGRID-ORCS" id="850556">
    <property type="hits" value="1 hit in 10 CRISPR screens"/>
</dbReference>
<dbReference type="PRO" id="PR:P43590"/>
<dbReference type="Proteomes" id="UP000002311">
    <property type="component" value="Chromosome VI"/>
</dbReference>
<dbReference type="RNAct" id="P43590">
    <property type="molecule type" value="protein"/>
</dbReference>
<dbReference type="GO" id="GO:0005737">
    <property type="term" value="C:cytoplasm"/>
    <property type="evidence" value="ECO:0007005"/>
    <property type="project" value="SGD"/>
</dbReference>
<dbReference type="GO" id="GO:0016020">
    <property type="term" value="C:membrane"/>
    <property type="evidence" value="ECO:0007669"/>
    <property type="project" value="UniProtKB-SubCell"/>
</dbReference>
<dbReference type="GO" id="GO:0030145">
    <property type="term" value="F:manganese ion binding"/>
    <property type="evidence" value="ECO:0007669"/>
    <property type="project" value="InterPro"/>
</dbReference>
<dbReference type="GO" id="GO:0070006">
    <property type="term" value="F:metalloaminopeptidase activity"/>
    <property type="evidence" value="ECO:0007669"/>
    <property type="project" value="InterPro"/>
</dbReference>
<dbReference type="GO" id="GO:0008233">
    <property type="term" value="F:peptidase activity"/>
    <property type="evidence" value="ECO:0000318"/>
    <property type="project" value="GO_Central"/>
</dbReference>
<dbReference type="GO" id="GO:0006508">
    <property type="term" value="P:proteolysis"/>
    <property type="evidence" value="ECO:0000318"/>
    <property type="project" value="GO_Central"/>
</dbReference>
<dbReference type="CDD" id="cd01087">
    <property type="entry name" value="Prolidase"/>
    <property type="match status" value="1"/>
</dbReference>
<dbReference type="FunFam" id="3.90.230.10:FF:000002">
    <property type="entry name" value="Xaa-Pro aminopeptidase 3"/>
    <property type="match status" value="1"/>
</dbReference>
<dbReference type="FunFam" id="3.40.350.10:FF:000024">
    <property type="entry name" value="YFR006W-like protein"/>
    <property type="match status" value="1"/>
</dbReference>
<dbReference type="Gene3D" id="3.90.230.10">
    <property type="entry name" value="Creatinase/methionine aminopeptidase superfamily"/>
    <property type="match status" value="1"/>
</dbReference>
<dbReference type="Gene3D" id="3.40.350.10">
    <property type="entry name" value="Creatinase/prolidase N-terminal domain"/>
    <property type="match status" value="1"/>
</dbReference>
<dbReference type="InterPro" id="IPR007865">
    <property type="entry name" value="Aminopep_P_N"/>
</dbReference>
<dbReference type="InterPro" id="IPR029149">
    <property type="entry name" value="Creatin/AminoP/Spt16_N"/>
</dbReference>
<dbReference type="InterPro" id="IPR036005">
    <property type="entry name" value="Creatinase/aminopeptidase-like"/>
</dbReference>
<dbReference type="InterPro" id="IPR000994">
    <property type="entry name" value="Pept_M24"/>
</dbReference>
<dbReference type="InterPro" id="IPR001131">
    <property type="entry name" value="Peptidase_M24B_aminopep-P_CS"/>
</dbReference>
<dbReference type="InterPro" id="IPR052433">
    <property type="entry name" value="X-Pro_dipept-like"/>
</dbReference>
<dbReference type="PANTHER" id="PTHR43226">
    <property type="entry name" value="XAA-PRO AMINOPEPTIDASE 3"/>
    <property type="match status" value="1"/>
</dbReference>
<dbReference type="PANTHER" id="PTHR43226:SF1">
    <property type="entry name" value="XAA-PRO DIPEPTIDASE"/>
    <property type="match status" value="1"/>
</dbReference>
<dbReference type="Pfam" id="PF05195">
    <property type="entry name" value="AMP_N"/>
    <property type="match status" value="1"/>
</dbReference>
<dbReference type="Pfam" id="PF00557">
    <property type="entry name" value="Peptidase_M24"/>
    <property type="match status" value="1"/>
</dbReference>
<dbReference type="SMART" id="SM01011">
    <property type="entry name" value="AMP_N"/>
    <property type="match status" value="1"/>
</dbReference>
<dbReference type="SUPFAM" id="SSF55920">
    <property type="entry name" value="Creatinase/aminopeptidase"/>
    <property type="match status" value="1"/>
</dbReference>
<dbReference type="SUPFAM" id="SSF53092">
    <property type="entry name" value="Creatinase/prolidase N-terminal domain"/>
    <property type="match status" value="1"/>
</dbReference>
<dbReference type="PROSITE" id="PS00491">
    <property type="entry name" value="PROLINE_PEPTIDASE"/>
    <property type="match status" value="1"/>
</dbReference>
<gene>
    <name type="ordered locus">YFR006W</name>
</gene>
<reference key="1">
    <citation type="journal article" date="1995" name="Nat. Genet.">
        <title>Analysis of the nucleotide sequence of chromosome VI from Saccharomyces cerevisiae.</title>
        <authorList>
            <person name="Murakami Y."/>
            <person name="Naitou M."/>
            <person name="Hagiwara H."/>
            <person name="Shibata T."/>
            <person name="Ozawa M."/>
            <person name="Sasanuma S."/>
            <person name="Sasanuma M."/>
            <person name="Tsuchiya Y."/>
            <person name="Soeda E."/>
            <person name="Yokoyama K."/>
            <person name="Yamazaki M."/>
            <person name="Tashiro H."/>
            <person name="Eki T."/>
        </authorList>
    </citation>
    <scope>NUCLEOTIDE SEQUENCE [LARGE SCALE GENOMIC DNA]</scope>
    <source>
        <strain>ATCC 204508 / S288c</strain>
    </source>
</reference>
<reference key="2">
    <citation type="journal article" date="2014" name="G3 (Bethesda)">
        <title>The reference genome sequence of Saccharomyces cerevisiae: Then and now.</title>
        <authorList>
            <person name="Engel S.R."/>
            <person name="Dietrich F.S."/>
            <person name="Fisk D.G."/>
            <person name="Binkley G."/>
            <person name="Balakrishnan R."/>
            <person name="Costanzo M.C."/>
            <person name="Dwight S.S."/>
            <person name="Hitz B.C."/>
            <person name="Karra K."/>
            <person name="Nash R.S."/>
            <person name="Weng S."/>
            <person name="Wong E.D."/>
            <person name="Lloyd P."/>
            <person name="Skrzypek M.S."/>
            <person name="Miyasato S.R."/>
            <person name="Simison M."/>
            <person name="Cherry J.M."/>
        </authorList>
    </citation>
    <scope>GENOME REANNOTATION</scope>
    <source>
        <strain>ATCC 204508 / S288c</strain>
    </source>
</reference>
<reference key="3">
    <citation type="journal article" date="2007" name="Genome Res.">
        <title>Approaching a complete repository of sequence-verified protein-encoding clones for Saccharomyces cerevisiae.</title>
        <authorList>
            <person name="Hu Y."/>
            <person name="Rolfs A."/>
            <person name="Bhullar B."/>
            <person name="Murthy T.V.S."/>
            <person name="Zhu C."/>
            <person name="Berger M.F."/>
            <person name="Camargo A.A."/>
            <person name="Kelley F."/>
            <person name="McCarron S."/>
            <person name="Jepson D."/>
            <person name="Richardson A."/>
            <person name="Raphael J."/>
            <person name="Moreira D."/>
            <person name="Taycher E."/>
            <person name="Zuo D."/>
            <person name="Mohr S."/>
            <person name="Kane M.F."/>
            <person name="Williamson J."/>
            <person name="Simpson A.J.G."/>
            <person name="Bulyk M.L."/>
            <person name="Harlow E."/>
            <person name="Marsischky G."/>
            <person name="Kolodner R.D."/>
            <person name="LaBaer J."/>
        </authorList>
    </citation>
    <scope>NUCLEOTIDE SEQUENCE [GENOMIC DNA]</scope>
    <source>
        <strain>ATCC 204508 / S288c</strain>
    </source>
</reference>
<reference key="4">
    <citation type="journal article" date="2003" name="Proc. Natl. Acad. Sci. U.S.A.">
        <title>A subset of membrane-associated proteins is ubiquitinated in response to mutations in the endoplasmic reticulum degradation machinery.</title>
        <authorList>
            <person name="Hitchcock A.L."/>
            <person name="Auld K."/>
            <person name="Gygi S.P."/>
            <person name="Silver P.A."/>
        </authorList>
    </citation>
    <scope>UBIQUITINATION [LARGE SCALE ANALYSIS] AT LYS-50</scope>
    <scope>IDENTIFICATION BY MASS SPECTROMETRY</scope>
</reference>
<reference key="5">
    <citation type="journal article" date="2012" name="Proteomics">
        <title>Sites of ubiquitin attachment in Saccharomyces cerevisiae.</title>
        <authorList>
            <person name="Starita L.M."/>
            <person name="Lo R.S."/>
            <person name="Eng J.K."/>
            <person name="von Haller P.D."/>
            <person name="Fields S."/>
        </authorList>
    </citation>
    <scope>UBIQUITINATION [LARGE SCALE ANALYSIS] AT LYS-50</scope>
    <scope>IDENTIFICATION BY MASS SPECTROMETRY [LARGE SCALE ANALYSIS]</scope>
</reference>
<feature type="chain" id="PRO_0000185099" description="Uncharacterized peptidase YFR006W">
    <location>
        <begin position="1"/>
        <end position="535"/>
    </location>
</feature>
<feature type="transmembrane region" description="Helical" evidence="1">
    <location>
        <begin position="8"/>
        <end position="24"/>
    </location>
</feature>
<feature type="binding site" evidence="1">
    <location>
        <position position="316"/>
    </location>
    <ligand>
        <name>Mn(2+)</name>
        <dbReference type="ChEBI" id="CHEBI:29035"/>
        <label>2</label>
    </ligand>
</feature>
<feature type="binding site" evidence="1">
    <location>
        <position position="327"/>
    </location>
    <ligand>
        <name>Mn(2+)</name>
        <dbReference type="ChEBI" id="CHEBI:29035"/>
        <label>1</label>
    </ligand>
</feature>
<feature type="binding site" evidence="1">
    <location>
        <position position="327"/>
    </location>
    <ligand>
        <name>Mn(2+)</name>
        <dbReference type="ChEBI" id="CHEBI:29035"/>
        <label>2</label>
    </ligand>
</feature>
<feature type="binding site" evidence="1">
    <location>
        <position position="412"/>
    </location>
    <ligand>
        <name>Mn(2+)</name>
        <dbReference type="ChEBI" id="CHEBI:29035"/>
        <label>1</label>
    </ligand>
</feature>
<feature type="binding site" evidence="1">
    <location>
        <position position="452"/>
    </location>
    <ligand>
        <name>Mn(2+)</name>
        <dbReference type="ChEBI" id="CHEBI:29035"/>
        <label>1</label>
    </ligand>
</feature>
<feature type="binding site" evidence="1">
    <location>
        <position position="493"/>
    </location>
    <ligand>
        <name>Mn(2+)</name>
        <dbReference type="ChEBI" id="CHEBI:29035"/>
        <label>1</label>
    </ligand>
</feature>
<feature type="binding site" evidence="1">
    <location>
        <position position="493"/>
    </location>
    <ligand>
        <name>Mn(2+)</name>
        <dbReference type="ChEBI" id="CHEBI:29035"/>
        <label>2</label>
    </ligand>
</feature>
<feature type="cross-link" description="Glycyl lysine isopeptide (Lys-Gly) (interchain with G-Cter in ubiquitin)" evidence="3">
    <location>
        <position position="50"/>
    </location>
</feature>
<feature type="sequence conflict" description="In Ref. 3; AAU09720." evidence="2" ref="3">
    <original>S</original>
    <variation>G</variation>
    <location>
        <position position="326"/>
    </location>
</feature>
<proteinExistence type="evidence at protein level"/>
<keyword id="KW-0378">Hydrolase</keyword>
<keyword id="KW-1017">Isopeptide bond</keyword>
<keyword id="KW-0464">Manganese</keyword>
<keyword id="KW-0472">Membrane</keyword>
<keyword id="KW-0479">Metal-binding</keyword>
<keyword id="KW-1185">Reference proteome</keyword>
<keyword id="KW-0812">Transmembrane</keyword>
<keyword id="KW-1133">Transmembrane helix</keyword>
<keyword id="KW-0832">Ubl conjugation</keyword>
<sequence>MCLEPISLVVFGSLVFFFGLVKYFKRGERQRTRGILQPEYKDKYYYSKEKGEEMGEVANVNEIPVKIRNHKYPAKEHNLRVKDLLLNRNPKLSKISTAFFIAGEELEGNKYCDTNKDFRQNRYFYHLSGVDIPASAILFNCSTDKLTLFLPNIDEEDVIWSGMPLSLDEAMRVFDIDEALYISDLGKKFKELQDFAIFTTDLDNVHDENIARSLIPSDPNFFYAMDETRAIKDWYEIESIRKACQISDKSHLAVMSALPIELNELQIQAEFEYHATRQGGRSLGYDPICCSGPACGTLHYVKNSEDIKGKHSILIDAGAEWRQYTSDITRCFPTSGKFTAEHREVYETVLDMQNQAMERIKPGAKWDDLHALTHKVLIKHFLSMGIFKKEFSEDEIFKRRASCAFYPHGLGHMLGLDVHDVGGNPNYDDPDPMFRYLRIRRPLKENMVITNEPGCYFNQFLIKEFLEKHPERLEVVDMSVLKRYMYVGGVRIEDDILVTKDGYENLTGITSDPDEIEKIVQKGLKKPRSGFHVIV</sequence>
<comment type="cofactor">
    <cofactor evidence="2">
        <name>Mn(2+)</name>
        <dbReference type="ChEBI" id="CHEBI:29035"/>
    </cofactor>
    <text evidence="2">Binds 2 manganese ions per subunit.</text>
</comment>
<comment type="subcellular location">
    <subcellularLocation>
        <location evidence="2">Membrane</location>
        <topology evidence="2">Single-pass membrane protein</topology>
    </subcellularLocation>
</comment>
<comment type="similarity">
    <text evidence="2">Belongs to the peptidase M24B family.</text>
</comment>
<name>YFH6_YEAST</name>
<accession>P43590</accession>
<accession>D6VTN6</accession>
<accession>Q66RB5</accession>
<evidence type="ECO:0000255" key="1"/>
<evidence type="ECO:0000305" key="2"/>
<evidence type="ECO:0007744" key="3">
    <source>
    </source>
</evidence>